<feature type="chain" id="PRO_1000088462" description="Nucleoid occlusion factor SlmA">
    <location>
        <begin position="1"/>
        <end position="197"/>
    </location>
</feature>
<feature type="domain" description="HTH tetR-type" evidence="1">
    <location>
        <begin position="7"/>
        <end position="67"/>
    </location>
</feature>
<feature type="DNA-binding region" description="H-T-H motif" evidence="1">
    <location>
        <begin position="30"/>
        <end position="49"/>
    </location>
</feature>
<feature type="coiled-coil region" evidence="1">
    <location>
        <begin position="109"/>
        <end position="136"/>
    </location>
</feature>
<accession>B0TQK8</accession>
<evidence type="ECO:0000255" key="1">
    <source>
        <dbReference type="HAMAP-Rule" id="MF_01839"/>
    </source>
</evidence>
<dbReference type="EMBL" id="CP000931">
    <property type="protein sequence ID" value="ABZ75001.1"/>
    <property type="molecule type" value="Genomic_DNA"/>
</dbReference>
<dbReference type="RefSeq" id="WP_012275555.1">
    <property type="nucleotide sequence ID" value="NC_010334.1"/>
</dbReference>
<dbReference type="SMR" id="B0TQK8"/>
<dbReference type="STRING" id="458817.Shal_0426"/>
<dbReference type="KEGG" id="shl:Shal_0426"/>
<dbReference type="eggNOG" id="COG1309">
    <property type="taxonomic scope" value="Bacteria"/>
</dbReference>
<dbReference type="HOGENOM" id="CLU_069356_5_0_6"/>
<dbReference type="OrthoDB" id="9179041at2"/>
<dbReference type="Proteomes" id="UP000001317">
    <property type="component" value="Chromosome"/>
</dbReference>
<dbReference type="GO" id="GO:0043590">
    <property type="term" value="C:bacterial nucleoid"/>
    <property type="evidence" value="ECO:0007669"/>
    <property type="project" value="UniProtKB-UniRule"/>
</dbReference>
<dbReference type="GO" id="GO:0005737">
    <property type="term" value="C:cytoplasm"/>
    <property type="evidence" value="ECO:0007669"/>
    <property type="project" value="UniProtKB-UniRule"/>
</dbReference>
<dbReference type="GO" id="GO:0043565">
    <property type="term" value="F:sequence-specific DNA binding"/>
    <property type="evidence" value="ECO:0007669"/>
    <property type="project" value="UniProtKB-UniRule"/>
</dbReference>
<dbReference type="GO" id="GO:0051301">
    <property type="term" value="P:cell division"/>
    <property type="evidence" value="ECO:0007669"/>
    <property type="project" value="UniProtKB-KW"/>
</dbReference>
<dbReference type="GO" id="GO:0010974">
    <property type="term" value="P:negative regulation of division septum assembly"/>
    <property type="evidence" value="ECO:0007669"/>
    <property type="project" value="InterPro"/>
</dbReference>
<dbReference type="Gene3D" id="1.10.357.10">
    <property type="entry name" value="Tetracycline Repressor, domain 2"/>
    <property type="match status" value="1"/>
</dbReference>
<dbReference type="HAMAP" id="MF_01839">
    <property type="entry name" value="NO_factor_SlmA"/>
    <property type="match status" value="1"/>
</dbReference>
<dbReference type="InterPro" id="IPR009057">
    <property type="entry name" value="Homeodomain-like_sf"/>
</dbReference>
<dbReference type="InterPro" id="IPR050624">
    <property type="entry name" value="HTH-type_Tx_Regulator"/>
</dbReference>
<dbReference type="InterPro" id="IPR001647">
    <property type="entry name" value="HTH_TetR"/>
</dbReference>
<dbReference type="InterPro" id="IPR023769">
    <property type="entry name" value="NO_SlmA"/>
</dbReference>
<dbReference type="InterPro" id="IPR054580">
    <property type="entry name" value="SlmA-like_C"/>
</dbReference>
<dbReference type="InterPro" id="IPR036271">
    <property type="entry name" value="Tet_transcr_reg_TetR-rel_C_sf"/>
</dbReference>
<dbReference type="NCBIfam" id="NF007015">
    <property type="entry name" value="PRK09480.1"/>
    <property type="match status" value="1"/>
</dbReference>
<dbReference type="PANTHER" id="PTHR43479">
    <property type="entry name" value="ACREF/ENVCD OPERON REPRESSOR-RELATED"/>
    <property type="match status" value="1"/>
</dbReference>
<dbReference type="PANTHER" id="PTHR43479:SF11">
    <property type="entry name" value="ACREF_ENVCD OPERON REPRESSOR-RELATED"/>
    <property type="match status" value="1"/>
</dbReference>
<dbReference type="Pfam" id="PF22276">
    <property type="entry name" value="SlmA-like_C"/>
    <property type="match status" value="1"/>
</dbReference>
<dbReference type="Pfam" id="PF00440">
    <property type="entry name" value="TetR_N"/>
    <property type="match status" value="1"/>
</dbReference>
<dbReference type="SUPFAM" id="SSF46689">
    <property type="entry name" value="Homeodomain-like"/>
    <property type="match status" value="1"/>
</dbReference>
<dbReference type="SUPFAM" id="SSF48498">
    <property type="entry name" value="Tetracyclin repressor-like, C-terminal domain"/>
    <property type="match status" value="1"/>
</dbReference>
<dbReference type="PROSITE" id="PS50977">
    <property type="entry name" value="HTH_TETR_2"/>
    <property type="match status" value="1"/>
</dbReference>
<comment type="function">
    <text evidence="1">Required for nucleoid occlusion (NO) phenomenon, which prevents Z-ring formation and cell division over the nucleoid. Acts as a DNA-associated cell division inhibitor that binds simultaneously chromosomal DNA and FtsZ, and disrupts the assembly of FtsZ polymers. SlmA-DNA-binding sequences (SBS) are dispersed on non-Ter regions of the chromosome, preventing FtsZ polymerization at these regions.</text>
</comment>
<comment type="subunit">
    <text evidence="1">Homodimer. Interacts with FtsZ.</text>
</comment>
<comment type="subcellular location">
    <subcellularLocation>
        <location evidence="1">Cytoplasm</location>
        <location evidence="1">Nucleoid</location>
    </subcellularLocation>
</comment>
<comment type="similarity">
    <text evidence="1">Belongs to the nucleoid occlusion factor SlmA family.</text>
</comment>
<protein>
    <recommendedName>
        <fullName evidence="1">Nucleoid occlusion factor SlmA</fullName>
    </recommendedName>
</protein>
<reference key="1">
    <citation type="submission" date="2008-01" db="EMBL/GenBank/DDBJ databases">
        <title>Complete sequence of Shewanella halifaxensis HAW-EB4.</title>
        <authorList>
            <consortium name="US DOE Joint Genome Institute"/>
            <person name="Copeland A."/>
            <person name="Lucas S."/>
            <person name="Lapidus A."/>
            <person name="Glavina del Rio T."/>
            <person name="Dalin E."/>
            <person name="Tice H."/>
            <person name="Bruce D."/>
            <person name="Goodwin L."/>
            <person name="Pitluck S."/>
            <person name="Sims D."/>
            <person name="Brettin T."/>
            <person name="Detter J.C."/>
            <person name="Han C."/>
            <person name="Kuske C.R."/>
            <person name="Schmutz J."/>
            <person name="Larimer F."/>
            <person name="Land M."/>
            <person name="Hauser L."/>
            <person name="Kyrpides N."/>
            <person name="Kim E."/>
            <person name="Zhao J.-S."/>
            <person name="Richardson P."/>
        </authorList>
    </citation>
    <scope>NUCLEOTIDE SEQUENCE [LARGE SCALE GENOMIC DNA]</scope>
    <source>
        <strain>HAW-EB4</strain>
    </source>
</reference>
<name>SLMA_SHEHH</name>
<organism>
    <name type="scientific">Shewanella halifaxensis (strain HAW-EB4)</name>
    <dbReference type="NCBI Taxonomy" id="458817"/>
    <lineage>
        <taxon>Bacteria</taxon>
        <taxon>Pseudomonadati</taxon>
        <taxon>Pseudomonadota</taxon>
        <taxon>Gammaproteobacteria</taxon>
        <taxon>Alteromonadales</taxon>
        <taxon>Shewanellaceae</taxon>
        <taxon>Shewanella</taxon>
    </lineage>
</organism>
<sequence length="197" mass="22529">MAASPKINRREHILQCLATMLETSPGQRITTAKLAAEVGVSEAALYRHFPSKARMFEGLIEFIEESLLSRINLIMDEEKDTMKRCQQLLQLLLVFAERNPGISRVLNGDALLGENERLRSRISQLFAKIETHLKQILREKSLREGKGFNLDEAVLANLLLAVAEGRIAQFVRSEFKLKPTKHFNEQWTFIQQQLLQS</sequence>
<keyword id="KW-0131">Cell cycle</keyword>
<keyword id="KW-0132">Cell division</keyword>
<keyword id="KW-0175">Coiled coil</keyword>
<keyword id="KW-0963">Cytoplasm</keyword>
<keyword id="KW-0238">DNA-binding</keyword>
<proteinExistence type="inferred from homology"/>
<gene>
    <name evidence="1" type="primary">slmA</name>
    <name type="ordered locus">Shal_0426</name>
</gene>